<feature type="chain" id="PRO_0000255091" description="Cytochrome b">
    <location>
        <begin position="1"/>
        <end position="380"/>
    </location>
</feature>
<feature type="transmembrane region" description="Helical" evidence="2">
    <location>
        <begin position="33"/>
        <end position="53"/>
    </location>
</feature>
<feature type="transmembrane region" description="Helical" evidence="2">
    <location>
        <begin position="77"/>
        <end position="98"/>
    </location>
</feature>
<feature type="transmembrane region" description="Helical" evidence="2">
    <location>
        <begin position="113"/>
        <end position="133"/>
    </location>
</feature>
<feature type="transmembrane region" description="Helical" evidence="2">
    <location>
        <begin position="178"/>
        <end position="198"/>
    </location>
</feature>
<feature type="transmembrane region" description="Helical" evidence="2">
    <location>
        <begin position="226"/>
        <end position="246"/>
    </location>
</feature>
<feature type="transmembrane region" description="Helical" evidence="2">
    <location>
        <begin position="288"/>
        <end position="308"/>
    </location>
</feature>
<feature type="transmembrane region" description="Helical" evidence="2">
    <location>
        <begin position="320"/>
        <end position="340"/>
    </location>
</feature>
<feature type="transmembrane region" description="Helical" evidence="2">
    <location>
        <begin position="347"/>
        <end position="367"/>
    </location>
</feature>
<feature type="binding site" description="axial binding residue" evidence="2">
    <location>
        <position position="83"/>
    </location>
    <ligand>
        <name>heme b</name>
        <dbReference type="ChEBI" id="CHEBI:60344"/>
        <label>b562</label>
    </ligand>
    <ligandPart>
        <name>Fe</name>
        <dbReference type="ChEBI" id="CHEBI:18248"/>
    </ligandPart>
</feature>
<feature type="binding site" description="axial binding residue" evidence="2">
    <location>
        <position position="97"/>
    </location>
    <ligand>
        <name>heme b</name>
        <dbReference type="ChEBI" id="CHEBI:60344"/>
        <label>b566</label>
    </ligand>
    <ligandPart>
        <name>Fe</name>
        <dbReference type="ChEBI" id="CHEBI:18248"/>
    </ligandPart>
</feature>
<feature type="binding site" description="axial binding residue" evidence="2">
    <location>
        <position position="182"/>
    </location>
    <ligand>
        <name>heme b</name>
        <dbReference type="ChEBI" id="CHEBI:60344"/>
        <label>b562</label>
    </ligand>
    <ligandPart>
        <name>Fe</name>
        <dbReference type="ChEBI" id="CHEBI:18248"/>
    </ligandPart>
</feature>
<feature type="binding site" description="axial binding residue" evidence="2">
    <location>
        <position position="196"/>
    </location>
    <ligand>
        <name>heme b</name>
        <dbReference type="ChEBI" id="CHEBI:60344"/>
        <label>b566</label>
    </ligand>
    <ligandPart>
        <name>Fe</name>
        <dbReference type="ChEBI" id="CHEBI:18248"/>
    </ligandPart>
</feature>
<feature type="binding site" evidence="2">
    <location>
        <position position="201"/>
    </location>
    <ligand>
        <name>a ubiquinone</name>
        <dbReference type="ChEBI" id="CHEBI:16389"/>
    </ligand>
</feature>
<reference key="1">
    <citation type="journal article" date="2001" name="Mamm. Biol.">
        <title>The phylogenetic position of southern relictual species of Microtus (Muridae: Rodentia) in North America.</title>
        <authorList>
            <person name="Conroy C.J."/>
            <person name="Hortelano Y."/>
            <person name="Cervantes F.A."/>
            <person name="Cook J.A."/>
        </authorList>
    </citation>
    <scope>NUCLEOTIDE SEQUENCE [GENOMIC DNA]</scope>
</reference>
<comment type="function">
    <text evidence="2">Component of the ubiquinol-cytochrome c reductase complex (complex III or cytochrome b-c1 complex) that is part of the mitochondrial respiratory chain. The b-c1 complex mediates electron transfer from ubiquinol to cytochrome c. Contributes to the generation of a proton gradient across the mitochondrial membrane that is then used for ATP synthesis.</text>
</comment>
<comment type="cofactor">
    <cofactor evidence="2">
        <name>heme b</name>
        <dbReference type="ChEBI" id="CHEBI:60344"/>
    </cofactor>
    <text evidence="2">Binds 2 heme b groups non-covalently.</text>
</comment>
<comment type="subunit">
    <text evidence="2">The cytochrome bc1 complex contains 11 subunits: 3 respiratory subunits (MT-CYB, CYC1 and UQCRFS1), 2 core proteins (UQCRC1 and UQCRC2) and 6 low-molecular weight proteins (UQCRH/QCR6, UQCRB/QCR7, UQCRQ/QCR8, UQCR10/QCR9, UQCR11/QCR10 and a cleavage product of UQCRFS1). This cytochrome bc1 complex then forms a dimer.</text>
</comment>
<comment type="subcellular location">
    <subcellularLocation>
        <location evidence="2">Mitochondrion inner membrane</location>
        <topology evidence="2">Multi-pass membrane protein</topology>
    </subcellularLocation>
</comment>
<comment type="miscellaneous">
    <text evidence="1">Heme 1 (or BL or b562) is low-potential and absorbs at about 562 nm, and heme 2 (or BH or b566) is high-potential and absorbs at about 566 nm.</text>
</comment>
<comment type="similarity">
    <text evidence="3 4">Belongs to the cytochrome b family.</text>
</comment>
<comment type="caution">
    <text evidence="2">The full-length protein contains only eight transmembrane helices, not nine as predicted by bioinformatics tools.</text>
</comment>
<proteinExistence type="inferred from homology"/>
<organism>
    <name type="scientific">Microtus quasiater</name>
    <name type="common">Jalapan pine vole</name>
    <dbReference type="NCBI Taxonomy" id="169415"/>
    <lineage>
        <taxon>Eukaryota</taxon>
        <taxon>Metazoa</taxon>
        <taxon>Chordata</taxon>
        <taxon>Craniata</taxon>
        <taxon>Vertebrata</taxon>
        <taxon>Euteleostomi</taxon>
        <taxon>Mammalia</taxon>
        <taxon>Eutheria</taxon>
        <taxon>Euarchontoglires</taxon>
        <taxon>Glires</taxon>
        <taxon>Rodentia</taxon>
        <taxon>Myomorpha</taxon>
        <taxon>Muroidea</taxon>
        <taxon>Cricetidae</taxon>
        <taxon>Arvicolinae</taxon>
        <taxon>Microtus</taxon>
    </lineage>
</organism>
<keyword id="KW-0249">Electron transport</keyword>
<keyword id="KW-0349">Heme</keyword>
<keyword id="KW-0408">Iron</keyword>
<keyword id="KW-0472">Membrane</keyword>
<keyword id="KW-0479">Metal-binding</keyword>
<keyword id="KW-0496">Mitochondrion</keyword>
<keyword id="KW-0999">Mitochondrion inner membrane</keyword>
<keyword id="KW-0679">Respiratory chain</keyword>
<keyword id="KW-0812">Transmembrane</keyword>
<keyword id="KW-1133">Transmembrane helix</keyword>
<keyword id="KW-0813">Transport</keyword>
<keyword id="KW-0830">Ubiquinone</keyword>
<evidence type="ECO:0000250" key="1"/>
<evidence type="ECO:0000250" key="2">
    <source>
        <dbReference type="UniProtKB" id="P00157"/>
    </source>
</evidence>
<evidence type="ECO:0000255" key="3">
    <source>
        <dbReference type="PROSITE-ProRule" id="PRU00967"/>
    </source>
</evidence>
<evidence type="ECO:0000255" key="4">
    <source>
        <dbReference type="PROSITE-ProRule" id="PRU00968"/>
    </source>
</evidence>
<sequence>MTIMRKKHPLIKIINHSFIDLPTPSNISSWWNFGSLLGLCLIIQILTGLFLAMHYTSDTSTAFSSVAHICRDVNYGWLIRYMHANGASMFFICLFLHVGRGIYYGSYNMIETWNMGIILLFAVMATAFMGYVLPWGQMSFWGATVITNLLSAIPYIGTTLVEWIWGGFSVDKATLTRFFAFHFILPFIITALVLVHLLFLHETGSNNPAGLNSDADKIPFHPYYTIKDFLGVLILLLAFMILTLFFPDILGDPDNYTPANPLNTPPHIKPEWYFLFAYAILRSIPNKLGGVLALILSIVILAFMPLLHTSKQRTLAFRPITQTMYWILVADLLILTWIGGQPVEYPFIIIGQTASIAYFAIIVIFMPIAGMIENNILDLD</sequence>
<geneLocation type="mitochondrion"/>
<name>CYB_MICQU</name>
<accession>Q94V02</accession>
<dbReference type="EMBL" id="AF410259">
    <property type="protein sequence ID" value="AAK96250.1"/>
    <property type="molecule type" value="Genomic_DNA"/>
</dbReference>
<dbReference type="SMR" id="Q94V02"/>
<dbReference type="GO" id="GO:0005743">
    <property type="term" value="C:mitochondrial inner membrane"/>
    <property type="evidence" value="ECO:0007669"/>
    <property type="project" value="UniProtKB-SubCell"/>
</dbReference>
<dbReference type="GO" id="GO:0045275">
    <property type="term" value="C:respiratory chain complex III"/>
    <property type="evidence" value="ECO:0007669"/>
    <property type="project" value="InterPro"/>
</dbReference>
<dbReference type="GO" id="GO:0046872">
    <property type="term" value="F:metal ion binding"/>
    <property type="evidence" value="ECO:0007669"/>
    <property type="project" value="UniProtKB-KW"/>
</dbReference>
<dbReference type="GO" id="GO:0008121">
    <property type="term" value="F:ubiquinol-cytochrome-c reductase activity"/>
    <property type="evidence" value="ECO:0007669"/>
    <property type="project" value="InterPro"/>
</dbReference>
<dbReference type="GO" id="GO:0006122">
    <property type="term" value="P:mitochondrial electron transport, ubiquinol to cytochrome c"/>
    <property type="evidence" value="ECO:0007669"/>
    <property type="project" value="TreeGrafter"/>
</dbReference>
<dbReference type="CDD" id="cd00290">
    <property type="entry name" value="cytochrome_b_C"/>
    <property type="match status" value="1"/>
</dbReference>
<dbReference type="CDD" id="cd00284">
    <property type="entry name" value="Cytochrome_b_N"/>
    <property type="match status" value="1"/>
</dbReference>
<dbReference type="FunFam" id="1.20.810.10:FF:000002">
    <property type="entry name" value="Cytochrome b"/>
    <property type="match status" value="1"/>
</dbReference>
<dbReference type="Gene3D" id="1.20.810.10">
    <property type="entry name" value="Cytochrome Bc1 Complex, Chain C"/>
    <property type="match status" value="1"/>
</dbReference>
<dbReference type="InterPro" id="IPR005798">
    <property type="entry name" value="Cyt_b/b6_C"/>
</dbReference>
<dbReference type="InterPro" id="IPR036150">
    <property type="entry name" value="Cyt_b/b6_C_sf"/>
</dbReference>
<dbReference type="InterPro" id="IPR005797">
    <property type="entry name" value="Cyt_b/b6_N"/>
</dbReference>
<dbReference type="InterPro" id="IPR027387">
    <property type="entry name" value="Cytb/b6-like_sf"/>
</dbReference>
<dbReference type="InterPro" id="IPR030689">
    <property type="entry name" value="Cytochrome_b"/>
</dbReference>
<dbReference type="InterPro" id="IPR048260">
    <property type="entry name" value="Cytochrome_b_C_euk/bac"/>
</dbReference>
<dbReference type="InterPro" id="IPR048259">
    <property type="entry name" value="Cytochrome_b_N_euk/bac"/>
</dbReference>
<dbReference type="InterPro" id="IPR016174">
    <property type="entry name" value="Di-haem_cyt_TM"/>
</dbReference>
<dbReference type="PANTHER" id="PTHR19271">
    <property type="entry name" value="CYTOCHROME B"/>
    <property type="match status" value="1"/>
</dbReference>
<dbReference type="PANTHER" id="PTHR19271:SF16">
    <property type="entry name" value="CYTOCHROME B"/>
    <property type="match status" value="1"/>
</dbReference>
<dbReference type="Pfam" id="PF00032">
    <property type="entry name" value="Cytochrom_B_C"/>
    <property type="match status" value="1"/>
</dbReference>
<dbReference type="Pfam" id="PF00033">
    <property type="entry name" value="Cytochrome_B"/>
    <property type="match status" value="1"/>
</dbReference>
<dbReference type="PIRSF" id="PIRSF038885">
    <property type="entry name" value="COB"/>
    <property type="match status" value="1"/>
</dbReference>
<dbReference type="SUPFAM" id="SSF81648">
    <property type="entry name" value="a domain/subunit of cytochrome bc1 complex (Ubiquinol-cytochrome c reductase)"/>
    <property type="match status" value="1"/>
</dbReference>
<dbReference type="SUPFAM" id="SSF81342">
    <property type="entry name" value="Transmembrane di-heme cytochromes"/>
    <property type="match status" value="1"/>
</dbReference>
<dbReference type="PROSITE" id="PS51003">
    <property type="entry name" value="CYTB_CTER"/>
    <property type="match status" value="1"/>
</dbReference>
<dbReference type="PROSITE" id="PS51002">
    <property type="entry name" value="CYTB_NTER"/>
    <property type="match status" value="1"/>
</dbReference>
<gene>
    <name type="primary">MT-CYB</name>
    <name type="synonym">COB</name>
    <name type="synonym">CYTB</name>
    <name type="synonym">MTCYB</name>
</gene>
<protein>
    <recommendedName>
        <fullName>Cytochrome b</fullName>
    </recommendedName>
    <alternativeName>
        <fullName>Complex III subunit 3</fullName>
    </alternativeName>
    <alternativeName>
        <fullName>Complex III subunit III</fullName>
    </alternativeName>
    <alternativeName>
        <fullName>Cytochrome b-c1 complex subunit 3</fullName>
    </alternativeName>
    <alternativeName>
        <fullName>Ubiquinol-cytochrome-c reductase complex cytochrome b subunit</fullName>
    </alternativeName>
</protein>